<protein>
    <recommendedName>
        <fullName>C-phycocyanin alpha subunit</fullName>
    </recommendedName>
</protein>
<evidence type="ECO:0000269" key="1">
    <source>
    </source>
</evidence>
<evidence type="ECO:0000269" key="2">
    <source>
    </source>
</evidence>
<evidence type="ECO:0000305" key="3"/>
<evidence type="ECO:0007744" key="4">
    <source>
        <dbReference type="PDB" id="1GH0"/>
    </source>
</evidence>
<evidence type="ECO:0007744" key="5">
    <source>
        <dbReference type="PDB" id="1HA7"/>
    </source>
</evidence>
<evidence type="ECO:0007744" key="6">
    <source>
        <dbReference type="PDB" id="2UUM"/>
    </source>
</evidence>
<evidence type="ECO:0007829" key="7">
    <source>
        <dbReference type="PDB" id="1GH0"/>
    </source>
</evidence>
<sequence>MKTPLTEAVSIADSQGRFLSSTEIQVAFGRFRQAKAGLEAAKALTSKADSLISGAAQAVYNKFPYTTQMQGPNYAADQRGKDKCARDIGYYLRMVTYCLIAGGTGPMDEYLIAGIDEINRTFELSPSWYIEALKYIKANHGLSGDAATEANSYLDYAINALS</sequence>
<reference key="1">
    <citation type="submission" date="1996-10" db="EMBL/GenBank/DDBJ databases">
        <authorList>
            <person name="Jeamton W."/>
            <person name="Chaisawadi S."/>
            <person name="Deshnium P."/>
            <person name="Castets A.M."/>
            <person name="Coursin T."/>
            <person name="Tandeau de Marsac N."/>
            <person name="Tanticharoen M."/>
            <person name="Cheevadhanarak S."/>
        </authorList>
    </citation>
    <scope>NUCLEOTIDE SEQUENCE [GENOMIC DNA]</scope>
    <source>
        <strain>C1</strain>
    </source>
</reference>
<reference evidence="4" key="2">
    <citation type="journal article" date="2001" name="Acta Crystallogr. D">
        <title>Structure of C-phycocyanin from Spirulina platensis at 2.2 A resolution: a novel monoclinic crystal form for phycobiliproteins in phycobilisomes.</title>
        <authorList>
            <person name="Wang X.Q."/>
            <person name="Li L.N."/>
            <person name="Chang W.R."/>
            <person name="Zhang J.P."/>
            <person name="Gui L.L."/>
            <person name="Guo B.J."/>
            <person name="Liang D.C."/>
        </authorList>
    </citation>
    <scope>X-RAY CRYSTALLOGRAPHY (2.20 ANGSTROMS) IN COMPLEX WITH PHYCOCYANOBILIN CHROMOPHORE</scope>
    <scope>SUBUNIT</scope>
    <scope>SEQUENCE REVISION TO 51</scope>
</reference>
<reference evidence="5" key="3">
    <citation type="journal article" date="2001" name="Biochem. Biophys. Res. Commun.">
        <title>Crystal structure of a light-harvesting protein C-phycocyanin from Spirulina platensis.</title>
        <authorList>
            <person name="Padyana A.K."/>
            <person name="Bhat V.B."/>
            <person name="Madhyasta K.M."/>
            <person name="Rajashankar K.R."/>
            <person name="Ramakumar S."/>
        </authorList>
    </citation>
    <scope>X-RAY CRYSTALLOGRAPHY (2.2 ANGSTROMS) IN COMPLEX WITH PHYCOCYANOBILIN CHROMOPHORE</scope>
    <scope>SEQUENCE REVISION TO 51 AND 148</scope>
</reference>
<reference evidence="6" key="4">
    <citation type="submission" date="2007-03" db="PDB data bank">
        <title>Crystal Structure of C-Phycocyanin from Phormidium, Lyngbya Spp. (Marine) and Spirulina Sp. (Fresh Water) Shows Two Different Ways of Energy Transfer between Two Hexamers.</title>
        <authorList>
            <person name="Satyanarayana L."/>
            <person name="Patel A."/>
            <person name="Mishra S."/>
            <person name="Ghosh P.K."/>
            <person name="Suresh C.G."/>
        </authorList>
    </citation>
    <scope>X-RAY CRYSTALLOGRAPHY (3.00 ANGSTROMS) IN COMPLEX WITH PHYCOCYANOBILIN CHROMOPHORE</scope>
    <scope>SUBUNIT</scope>
</reference>
<gene>
    <name type="primary">cpcA</name>
</gene>
<accession>P72509</accession>
<comment type="function">
    <text>Light-harvesting photosynthetic bile pigment-protein from the phycobiliprotein complex (phycobilisome, PBS). Phycocyanin is the major phycobiliprotein in the PBS rod.</text>
</comment>
<comment type="subunit">
    <text evidence="1 2">The alpha and beta subunits exhibit high affinity for one another and form heterodimers. These heterodimers form heterohexamers of 3 alpha and 3 beta subunits which, in turn, aggregate into a heterododecamer consisting of 2 heterohexamers.</text>
</comment>
<comment type="subcellular location">
    <subcellularLocation>
        <location>Cellular thylakoid membrane</location>
        <topology>Peripheral membrane protein</topology>
        <orientation>Cytoplasmic side</orientation>
    </subcellularLocation>
    <text>Part of the phycobilisome rod.</text>
</comment>
<comment type="PTM">
    <text evidence="1 2 4 5 6">Contains one covalently linked phycocyanobilin chromophore.</text>
</comment>
<comment type="similarity">
    <text evidence="3">Belongs to the phycobiliprotein family.</text>
</comment>
<feature type="chain" id="PRO_0000199127" description="C-phycocyanin alpha subunit">
    <location>
        <begin position="1"/>
        <end position="162"/>
    </location>
</feature>
<feature type="binding site" description="covalent" evidence="1 2 4 5 6">
    <location>
        <position position="84"/>
    </location>
    <ligand>
        <name>(2R,3E)-phycocyanobilin</name>
        <dbReference type="ChEBI" id="CHEBI:85275"/>
    </ligand>
</feature>
<feature type="sequence conflict" description="In Ref. 1; CAA70296." evidence="3" ref="1">
    <original>L</original>
    <variation>R</variation>
    <location>
        <position position="51"/>
    </location>
</feature>
<feature type="sequence conflict" description="In Ref. 1; CAA70296." evidence="3" ref="1">
    <original>T</original>
    <variation>G</variation>
    <location>
        <position position="148"/>
    </location>
</feature>
<feature type="helix" evidence="7">
    <location>
        <begin position="4"/>
        <end position="14"/>
    </location>
</feature>
<feature type="helix" evidence="7">
    <location>
        <begin position="21"/>
        <end position="46"/>
    </location>
</feature>
<feature type="helix" evidence="7">
    <location>
        <begin position="48"/>
        <end position="62"/>
    </location>
</feature>
<feature type="helix" evidence="7">
    <location>
        <begin position="65"/>
        <end position="68"/>
    </location>
</feature>
<feature type="helix" evidence="7">
    <location>
        <begin position="78"/>
        <end position="101"/>
    </location>
</feature>
<feature type="helix" evidence="7">
    <location>
        <begin position="105"/>
        <end position="110"/>
    </location>
</feature>
<feature type="turn" evidence="7">
    <location>
        <begin position="111"/>
        <end position="114"/>
    </location>
</feature>
<feature type="helix" evidence="7">
    <location>
        <begin position="115"/>
        <end position="121"/>
    </location>
</feature>
<feature type="helix" evidence="7">
    <location>
        <begin position="126"/>
        <end position="139"/>
    </location>
</feature>
<feature type="helix" evidence="7">
    <location>
        <begin position="144"/>
        <end position="160"/>
    </location>
</feature>
<keyword id="KW-0002">3D-structure</keyword>
<keyword id="KW-0042">Antenna complex</keyword>
<keyword id="KW-0089">Bile pigment</keyword>
<keyword id="KW-0157">Chromophore</keyword>
<keyword id="KW-0249">Electron transport</keyword>
<keyword id="KW-0472">Membrane</keyword>
<keyword id="KW-0602">Photosynthesis</keyword>
<keyword id="KW-0605">Phycobilisome</keyword>
<keyword id="KW-0793">Thylakoid</keyword>
<keyword id="KW-0813">Transport</keyword>
<name>PHCA_ARTPT</name>
<proteinExistence type="evidence at protein level"/>
<dbReference type="EMBL" id="Y09074">
    <property type="protein sequence ID" value="CAA70296.1"/>
    <property type="molecule type" value="Genomic_DNA"/>
</dbReference>
<dbReference type="PDB" id="1GH0">
    <property type="method" value="X-ray"/>
    <property type="resolution" value="2.20 A"/>
    <property type="chains" value="A/C/E/G/I/K/M/O/Q/S/U/W=1-162"/>
</dbReference>
<dbReference type="PDB" id="1HA7">
    <property type="method" value="X-ray"/>
    <property type="resolution" value="2.20 A"/>
    <property type="chains" value="A/C/E/G/I/K/M/O/Q/S/U/W=1-162"/>
</dbReference>
<dbReference type="PDB" id="2UUM">
    <property type="method" value="X-ray"/>
    <property type="resolution" value="3.00 A"/>
    <property type="chains" value="A/C/E/G/I/K/M/O/Q/S/U/W=1-162"/>
</dbReference>
<dbReference type="PDBsum" id="1GH0"/>
<dbReference type="PDBsum" id="1HA7"/>
<dbReference type="PDBsum" id="2UUM"/>
<dbReference type="SASBDB" id="P72509"/>
<dbReference type="SMR" id="P72509"/>
<dbReference type="EvolutionaryTrace" id="P72509"/>
<dbReference type="GO" id="GO:0030089">
    <property type="term" value="C:phycobilisome"/>
    <property type="evidence" value="ECO:0007669"/>
    <property type="project" value="UniProtKB-KW"/>
</dbReference>
<dbReference type="GO" id="GO:0031676">
    <property type="term" value="C:plasma membrane-derived thylakoid membrane"/>
    <property type="evidence" value="ECO:0007669"/>
    <property type="project" value="UniProtKB-SubCell"/>
</dbReference>
<dbReference type="GO" id="GO:0015979">
    <property type="term" value="P:photosynthesis"/>
    <property type="evidence" value="ECO:0007669"/>
    <property type="project" value="UniProtKB-KW"/>
</dbReference>
<dbReference type="CDD" id="cd14770">
    <property type="entry name" value="PC-PEC_alpha"/>
    <property type="match status" value="1"/>
</dbReference>
<dbReference type="Gene3D" id="1.10.490.20">
    <property type="entry name" value="Phycocyanins"/>
    <property type="match status" value="1"/>
</dbReference>
<dbReference type="InterPro" id="IPR009050">
    <property type="entry name" value="Globin-like_sf"/>
</dbReference>
<dbReference type="InterPro" id="IPR012128">
    <property type="entry name" value="Phycobilisome_asu/bsu"/>
</dbReference>
<dbReference type="InterPro" id="IPR038719">
    <property type="entry name" value="Phycobilisome_asu/bsu_sf"/>
</dbReference>
<dbReference type="InterPro" id="IPR006246">
    <property type="entry name" value="Phycocyanin_a"/>
</dbReference>
<dbReference type="NCBIfam" id="TIGR01338">
    <property type="entry name" value="phycocy_alpha"/>
    <property type="match status" value="1"/>
</dbReference>
<dbReference type="PANTHER" id="PTHR34011:SF4">
    <property type="entry name" value="C-PHYCOCYANIN ALPHA SUBUNIT"/>
    <property type="match status" value="1"/>
</dbReference>
<dbReference type="PANTHER" id="PTHR34011">
    <property type="entry name" value="PHYCOBILISOME 32.1 KDA LINKER POLYPEPTIDE, PHYCOCYANIN-ASSOCIATED, ROD 2-RELATED"/>
    <property type="match status" value="1"/>
</dbReference>
<dbReference type="Pfam" id="PF00502">
    <property type="entry name" value="Phycobilisome"/>
    <property type="match status" value="1"/>
</dbReference>
<dbReference type="PIRSF" id="PIRSF000081">
    <property type="entry name" value="Phycocyanin"/>
    <property type="match status" value="1"/>
</dbReference>
<dbReference type="SUPFAM" id="SSF46458">
    <property type="entry name" value="Globin-like"/>
    <property type="match status" value="1"/>
</dbReference>
<organism>
    <name type="scientific">Arthrospira platensis</name>
    <name type="common">Spirulina platensis</name>
    <dbReference type="NCBI Taxonomy" id="118562"/>
    <lineage>
        <taxon>Bacteria</taxon>
        <taxon>Bacillati</taxon>
        <taxon>Cyanobacteriota</taxon>
        <taxon>Cyanophyceae</taxon>
        <taxon>Oscillatoriophycideae</taxon>
        <taxon>Oscillatoriales</taxon>
        <taxon>Microcoleaceae</taxon>
        <taxon>Arthrospira</taxon>
    </lineage>
</organism>